<dbReference type="EMBL" id="AE003852">
    <property type="protein sequence ID" value="AAF94870.1"/>
    <property type="molecule type" value="Genomic_DNA"/>
</dbReference>
<dbReference type="PIR" id="H82164">
    <property type="entry name" value="H82164"/>
</dbReference>
<dbReference type="RefSeq" id="NP_231356.1">
    <property type="nucleotide sequence ID" value="NC_002505.1"/>
</dbReference>
<dbReference type="RefSeq" id="WP_000983166.1">
    <property type="nucleotide sequence ID" value="NZ_LT906614.1"/>
</dbReference>
<dbReference type="SMR" id="Q9KRC2"/>
<dbReference type="STRING" id="243277.VC_1720"/>
<dbReference type="DNASU" id="2613725"/>
<dbReference type="EnsemblBacteria" id="AAF94870">
    <property type="protein sequence ID" value="AAF94870"/>
    <property type="gene ID" value="VC_1720"/>
</dbReference>
<dbReference type="KEGG" id="vch:VC_1720"/>
<dbReference type="PATRIC" id="fig|243277.26.peg.1646"/>
<dbReference type="eggNOG" id="COG3381">
    <property type="taxonomic scope" value="Bacteria"/>
</dbReference>
<dbReference type="HOGENOM" id="CLU_077650_4_0_6"/>
<dbReference type="Proteomes" id="UP000000584">
    <property type="component" value="Chromosome 1"/>
</dbReference>
<dbReference type="GO" id="GO:0005737">
    <property type="term" value="C:cytoplasm"/>
    <property type="evidence" value="ECO:0000318"/>
    <property type="project" value="GO_Central"/>
</dbReference>
<dbReference type="GO" id="GO:0051259">
    <property type="term" value="P:protein complex oligomerization"/>
    <property type="evidence" value="ECO:0007669"/>
    <property type="project" value="InterPro"/>
</dbReference>
<dbReference type="GO" id="GO:0006457">
    <property type="term" value="P:protein folding"/>
    <property type="evidence" value="ECO:0007669"/>
    <property type="project" value="UniProtKB-UniRule"/>
</dbReference>
<dbReference type="GO" id="GO:0051604">
    <property type="term" value="P:protein maturation"/>
    <property type="evidence" value="ECO:0000318"/>
    <property type="project" value="GO_Central"/>
</dbReference>
<dbReference type="Gene3D" id="1.20.120.1820">
    <property type="match status" value="1"/>
</dbReference>
<dbReference type="Gene3D" id="1.20.1280.20">
    <property type="entry name" value="HscB, C-terminal domain"/>
    <property type="match status" value="1"/>
</dbReference>
<dbReference type="HAMAP" id="MF_01150">
    <property type="entry name" value="TorD"/>
    <property type="match status" value="1"/>
</dbReference>
<dbReference type="InterPro" id="IPR023069">
    <property type="entry name" value="Chaperone_TorD"/>
</dbReference>
<dbReference type="InterPro" id="IPR020945">
    <property type="entry name" value="DMSO/NO3_reduct_chaperone"/>
</dbReference>
<dbReference type="InterPro" id="IPR036386">
    <property type="entry name" value="HscB_C_sf"/>
</dbReference>
<dbReference type="InterPro" id="IPR036411">
    <property type="entry name" value="TorD-like_sf"/>
</dbReference>
<dbReference type="InterPro" id="IPR050289">
    <property type="entry name" value="TorD/DmsD_chaperones"/>
</dbReference>
<dbReference type="NCBIfam" id="NF003442">
    <property type="entry name" value="PRK04976.1"/>
    <property type="match status" value="1"/>
</dbReference>
<dbReference type="PANTHER" id="PTHR34227:SF11">
    <property type="entry name" value="CHAPERONE PROTEIN TORD"/>
    <property type="match status" value="1"/>
</dbReference>
<dbReference type="PANTHER" id="PTHR34227">
    <property type="entry name" value="CHAPERONE PROTEIN YCDY"/>
    <property type="match status" value="1"/>
</dbReference>
<dbReference type="Pfam" id="PF02613">
    <property type="entry name" value="Nitrate_red_del"/>
    <property type="match status" value="1"/>
</dbReference>
<dbReference type="SUPFAM" id="SSF89155">
    <property type="entry name" value="TorD-like"/>
    <property type="match status" value="1"/>
</dbReference>
<keyword id="KW-0143">Chaperone</keyword>
<keyword id="KW-0963">Cytoplasm</keyword>
<keyword id="KW-1185">Reference proteome</keyword>
<sequence>MMQELKILNEKRAEIYWWLSSLFFKELSEQDIARYHSAEVRTFLSGLADEQSLNREVKHLVEALNRLQNRQDAQLELAADFCDLFLKSDRDSALPYASVYTDKGLLNGKPAQQMRELLGAHGVKVEQNLNEPEDHLAIQLDFLAHLAISANQIEHSAQLSSALQAQSDFISQHLLTWLPAFAERCTQFDAFGLYSAAARLALAFIQQDKHCLDELFQETH</sequence>
<reference key="1">
    <citation type="journal article" date="2000" name="Nature">
        <title>DNA sequence of both chromosomes of the cholera pathogen Vibrio cholerae.</title>
        <authorList>
            <person name="Heidelberg J.F."/>
            <person name="Eisen J.A."/>
            <person name="Nelson W.C."/>
            <person name="Clayton R.A."/>
            <person name="Gwinn M.L."/>
            <person name="Dodson R.J."/>
            <person name="Haft D.H."/>
            <person name="Hickey E.K."/>
            <person name="Peterson J.D."/>
            <person name="Umayam L.A."/>
            <person name="Gill S.R."/>
            <person name="Nelson K.E."/>
            <person name="Read T.D."/>
            <person name="Tettelin H."/>
            <person name="Richardson D.L."/>
            <person name="Ermolaeva M.D."/>
            <person name="Vamathevan J.J."/>
            <person name="Bass S."/>
            <person name="Qin H."/>
            <person name="Dragoi I."/>
            <person name="Sellers P."/>
            <person name="McDonald L.A."/>
            <person name="Utterback T.R."/>
            <person name="Fleischmann R.D."/>
            <person name="Nierman W.C."/>
            <person name="White O."/>
            <person name="Salzberg S.L."/>
            <person name="Smith H.O."/>
            <person name="Colwell R.R."/>
            <person name="Mekalanos J.J."/>
            <person name="Venter J.C."/>
            <person name="Fraser C.M."/>
        </authorList>
    </citation>
    <scope>NUCLEOTIDE SEQUENCE [LARGE SCALE GENOMIC DNA]</scope>
    <source>
        <strain>ATCC 39315 / El Tor Inaba N16961</strain>
    </source>
</reference>
<feature type="chain" id="PRO_0000211644" description="Chaperone protein TorD">
    <location>
        <begin position="1"/>
        <end position="220"/>
    </location>
</feature>
<proteinExistence type="inferred from homology"/>
<name>TORD_VIBCH</name>
<accession>Q9KRC2</accession>
<protein>
    <recommendedName>
        <fullName evidence="1">Chaperone protein TorD</fullName>
    </recommendedName>
</protein>
<comment type="function">
    <text evidence="1">Involved in the biogenesis of TorA. Acts on TorA before the insertion of the molybdenum cofactor and, as a result, probably favors a conformation of the apoenzyme that is competent for acquiring the cofactor.</text>
</comment>
<comment type="subcellular location">
    <subcellularLocation>
        <location evidence="1">Cytoplasm</location>
    </subcellularLocation>
</comment>
<comment type="similarity">
    <text evidence="1">Belongs to the TorD/DmsD family. TorD subfamily.</text>
</comment>
<evidence type="ECO:0000255" key="1">
    <source>
        <dbReference type="HAMAP-Rule" id="MF_01150"/>
    </source>
</evidence>
<organism>
    <name type="scientific">Vibrio cholerae serotype O1 (strain ATCC 39315 / El Tor Inaba N16961)</name>
    <dbReference type="NCBI Taxonomy" id="243277"/>
    <lineage>
        <taxon>Bacteria</taxon>
        <taxon>Pseudomonadati</taxon>
        <taxon>Pseudomonadota</taxon>
        <taxon>Gammaproteobacteria</taxon>
        <taxon>Vibrionales</taxon>
        <taxon>Vibrionaceae</taxon>
        <taxon>Vibrio</taxon>
    </lineage>
</organism>
<gene>
    <name evidence="1" type="primary">torD</name>
    <name type="ordered locus">VC_1720</name>
</gene>